<comment type="function">
    <text evidence="1">Catalyzes the reductive methylation of 2'-deoxyuridine-5'-monophosphate (dUMP) to 2'-deoxythymidine-5'-monophosphate (dTMP) while utilizing 5,10-methylenetetrahydrofolate (mTHF) as the methyl donor and reductant in the reaction, yielding dihydrofolate (DHF) as a by-product. This enzymatic reaction provides an intracellular de novo source of dTMP, an essential precursor for DNA biosynthesis.</text>
</comment>
<comment type="catalytic activity">
    <reaction evidence="1">
        <text>dUMP + (6R)-5,10-methylene-5,6,7,8-tetrahydrofolate = 7,8-dihydrofolate + dTMP</text>
        <dbReference type="Rhea" id="RHEA:12104"/>
        <dbReference type="ChEBI" id="CHEBI:15636"/>
        <dbReference type="ChEBI" id="CHEBI:57451"/>
        <dbReference type="ChEBI" id="CHEBI:63528"/>
        <dbReference type="ChEBI" id="CHEBI:246422"/>
        <dbReference type="EC" id="2.1.1.45"/>
    </reaction>
</comment>
<comment type="pathway">
    <text evidence="1">Pyrimidine metabolism; dTTP biosynthesis.</text>
</comment>
<comment type="subunit">
    <text evidence="1">Homodimer.</text>
</comment>
<comment type="subcellular location">
    <subcellularLocation>
        <location evidence="1">Cytoplasm</location>
    </subcellularLocation>
</comment>
<comment type="similarity">
    <text evidence="1">Belongs to the thymidylate synthase family. Bacterial-type ThyA subfamily.</text>
</comment>
<evidence type="ECO:0000255" key="1">
    <source>
        <dbReference type="HAMAP-Rule" id="MF_00008"/>
    </source>
</evidence>
<dbReference type="EC" id="2.1.1.45" evidence="1"/>
<dbReference type="EMBL" id="FM954972">
    <property type="protein sequence ID" value="CAV17532.1"/>
    <property type="molecule type" value="Genomic_DNA"/>
</dbReference>
<dbReference type="SMR" id="B7VJ78"/>
<dbReference type="STRING" id="575788.VS_0527"/>
<dbReference type="KEGG" id="vsp:VS_0527"/>
<dbReference type="eggNOG" id="COG0207">
    <property type="taxonomic scope" value="Bacteria"/>
</dbReference>
<dbReference type="HOGENOM" id="CLU_021669_0_0_6"/>
<dbReference type="UniPathway" id="UPA00575"/>
<dbReference type="Proteomes" id="UP000009100">
    <property type="component" value="Chromosome 1"/>
</dbReference>
<dbReference type="GO" id="GO:0005829">
    <property type="term" value="C:cytosol"/>
    <property type="evidence" value="ECO:0007669"/>
    <property type="project" value="TreeGrafter"/>
</dbReference>
<dbReference type="GO" id="GO:0004799">
    <property type="term" value="F:thymidylate synthase activity"/>
    <property type="evidence" value="ECO:0007669"/>
    <property type="project" value="UniProtKB-UniRule"/>
</dbReference>
<dbReference type="GO" id="GO:0006231">
    <property type="term" value="P:dTMP biosynthetic process"/>
    <property type="evidence" value="ECO:0007669"/>
    <property type="project" value="UniProtKB-UniRule"/>
</dbReference>
<dbReference type="GO" id="GO:0006235">
    <property type="term" value="P:dTTP biosynthetic process"/>
    <property type="evidence" value="ECO:0007669"/>
    <property type="project" value="UniProtKB-UniRule"/>
</dbReference>
<dbReference type="GO" id="GO:0032259">
    <property type="term" value="P:methylation"/>
    <property type="evidence" value="ECO:0007669"/>
    <property type="project" value="UniProtKB-KW"/>
</dbReference>
<dbReference type="CDD" id="cd00351">
    <property type="entry name" value="TS_Pyrimidine_HMase"/>
    <property type="match status" value="1"/>
</dbReference>
<dbReference type="FunFam" id="3.30.572.10:FF:000003">
    <property type="entry name" value="Thymidylate synthase"/>
    <property type="match status" value="1"/>
</dbReference>
<dbReference type="Gene3D" id="3.30.572.10">
    <property type="entry name" value="Thymidylate synthase/dCMP hydroxymethylase domain"/>
    <property type="match status" value="1"/>
</dbReference>
<dbReference type="HAMAP" id="MF_00008">
    <property type="entry name" value="Thymidy_synth_bact"/>
    <property type="match status" value="1"/>
</dbReference>
<dbReference type="InterPro" id="IPR045097">
    <property type="entry name" value="Thymidate_synth/dCMP_Mease"/>
</dbReference>
<dbReference type="InterPro" id="IPR023451">
    <property type="entry name" value="Thymidate_synth/dCMP_Mease_dom"/>
</dbReference>
<dbReference type="InterPro" id="IPR036926">
    <property type="entry name" value="Thymidate_synth/dCMP_Mease_sf"/>
</dbReference>
<dbReference type="InterPro" id="IPR000398">
    <property type="entry name" value="Thymidylate_synthase"/>
</dbReference>
<dbReference type="InterPro" id="IPR020940">
    <property type="entry name" value="Thymidylate_synthase_AS"/>
</dbReference>
<dbReference type="NCBIfam" id="NF002498">
    <property type="entry name" value="PRK01827.1-4"/>
    <property type="match status" value="1"/>
</dbReference>
<dbReference type="NCBIfam" id="TIGR03284">
    <property type="entry name" value="thym_sym"/>
    <property type="match status" value="1"/>
</dbReference>
<dbReference type="PANTHER" id="PTHR11548:SF9">
    <property type="entry name" value="THYMIDYLATE SYNTHASE"/>
    <property type="match status" value="1"/>
</dbReference>
<dbReference type="PANTHER" id="PTHR11548">
    <property type="entry name" value="THYMIDYLATE SYNTHASE 1"/>
    <property type="match status" value="1"/>
</dbReference>
<dbReference type="Pfam" id="PF00303">
    <property type="entry name" value="Thymidylat_synt"/>
    <property type="match status" value="1"/>
</dbReference>
<dbReference type="PRINTS" id="PR00108">
    <property type="entry name" value="THYMDSNTHASE"/>
</dbReference>
<dbReference type="SUPFAM" id="SSF55831">
    <property type="entry name" value="Thymidylate synthase/dCMP hydroxymethylase"/>
    <property type="match status" value="1"/>
</dbReference>
<dbReference type="PROSITE" id="PS00091">
    <property type="entry name" value="THYMIDYLATE_SYNTHASE"/>
    <property type="match status" value="1"/>
</dbReference>
<organism>
    <name type="scientific">Vibrio atlanticus (strain LGP32)</name>
    <name type="common">Vibrio splendidus (strain Mel32)</name>
    <dbReference type="NCBI Taxonomy" id="575788"/>
    <lineage>
        <taxon>Bacteria</taxon>
        <taxon>Pseudomonadati</taxon>
        <taxon>Pseudomonadota</taxon>
        <taxon>Gammaproteobacteria</taxon>
        <taxon>Vibrionales</taxon>
        <taxon>Vibrionaceae</taxon>
        <taxon>Vibrio</taxon>
    </lineage>
</organism>
<accession>B7VJ78</accession>
<name>TYSY_VIBA3</name>
<feature type="chain" id="PRO_1000197268" description="Thymidylate synthase">
    <location>
        <begin position="1"/>
        <end position="283"/>
    </location>
</feature>
<feature type="active site" description="Nucleophile" evidence="1">
    <location>
        <position position="160"/>
    </location>
</feature>
<feature type="binding site" evidence="1">
    <location>
        <position position="22"/>
    </location>
    <ligand>
        <name>dUMP</name>
        <dbReference type="ChEBI" id="CHEBI:246422"/>
    </ligand>
</feature>
<feature type="binding site" evidence="1">
    <location>
        <begin position="180"/>
        <end position="183"/>
    </location>
    <ligand>
        <name>dUMP</name>
        <dbReference type="ChEBI" id="CHEBI:246422"/>
    </ligand>
</feature>
<feature type="binding site" evidence="1">
    <location>
        <position position="183"/>
    </location>
    <ligand>
        <name>(6R)-5,10-methylene-5,6,7,8-tetrahydrofolate</name>
        <dbReference type="ChEBI" id="CHEBI:15636"/>
    </ligand>
</feature>
<feature type="binding site" evidence="1">
    <location>
        <position position="191"/>
    </location>
    <ligand>
        <name>dUMP</name>
        <dbReference type="ChEBI" id="CHEBI:246422"/>
    </ligand>
</feature>
<feature type="binding site" evidence="1">
    <location>
        <begin position="221"/>
        <end position="223"/>
    </location>
    <ligand>
        <name>dUMP</name>
        <dbReference type="ChEBI" id="CHEBI:246422"/>
    </ligand>
</feature>
<feature type="binding site" evidence="1">
    <location>
        <position position="282"/>
    </location>
    <ligand>
        <name>(6R)-5,10-methylene-5,6,7,8-tetrahydrofolate</name>
        <dbReference type="ChEBI" id="CHEBI:15636"/>
    </ligand>
</feature>
<protein>
    <recommendedName>
        <fullName evidence="1">Thymidylate synthase</fullName>
        <shortName evidence="1">TS</shortName>
        <shortName evidence="1">TSase</shortName>
        <ecNumber evidence="1">2.1.1.45</ecNumber>
    </recommendedName>
</protein>
<keyword id="KW-0963">Cytoplasm</keyword>
<keyword id="KW-0489">Methyltransferase</keyword>
<keyword id="KW-0545">Nucleotide biosynthesis</keyword>
<keyword id="KW-0808">Transferase</keyword>
<reference key="1">
    <citation type="submission" date="2009-02" db="EMBL/GenBank/DDBJ databases">
        <title>Vibrio splendidus str. LGP32 complete genome.</title>
        <authorList>
            <person name="Mazel D."/>
            <person name="Le Roux F."/>
        </authorList>
    </citation>
    <scope>NUCLEOTIDE SEQUENCE [LARGE SCALE GENOMIC DNA]</scope>
    <source>
        <strain>LGP32</strain>
    </source>
</reference>
<sequence length="283" mass="32486">MKQYLDLCQRIVNDGTWIENERTGKRCLTVINADLEYDVGNNQFPLVTTRKSFWKAAVAELLGYIRGYDNAEDFRKLGTKTWDANSNLNEAWLNNPYRKGEDDMGRVYGVQGRAWAKPDGGHIDQLKKIVDDLTNGIDDRGEILNFYNPGEFHMGCLRPCMYSHHFSLLGDTLYLNSTQRSCDVPLGLNFNMVQVYVFLAIMAQITGKKAGVAYHKLVNAHIYEDQLAPMRDIQLKREPLAGPTFHINPEIKSLEDLETWVTMDDFWVEGYECHEAIKYPFSV</sequence>
<proteinExistence type="inferred from homology"/>
<gene>
    <name evidence="1" type="primary">thyA</name>
    <name type="ordered locus">VS_0527</name>
</gene>